<evidence type="ECO:0000255" key="1">
    <source>
        <dbReference type="PROSITE-ProRule" id="PRU00353"/>
    </source>
</evidence>
<evidence type="ECO:0000269" key="2">
    <source>
    </source>
</evidence>
<evidence type="ECO:0000269" key="3">
    <source>
    </source>
</evidence>
<evidence type="ECO:0000269" key="4">
    <source>
    </source>
</evidence>
<evidence type="ECO:0000269" key="5">
    <source>
    </source>
</evidence>
<evidence type="ECO:0000269" key="6">
    <source>
    </source>
</evidence>
<evidence type="ECO:0000269" key="7">
    <source>
    </source>
</evidence>
<evidence type="ECO:0000269" key="8">
    <source>
    </source>
</evidence>
<evidence type="ECO:0000269" key="9">
    <source>
    </source>
</evidence>
<evidence type="ECO:0000269" key="10">
    <source>
    </source>
</evidence>
<evidence type="ECO:0000269" key="11">
    <source>
    </source>
</evidence>
<evidence type="ECO:0000269" key="12">
    <source>
    </source>
</evidence>
<evidence type="ECO:0000269" key="13">
    <source>
    </source>
</evidence>
<evidence type="ECO:0000269" key="14">
    <source>
    </source>
</evidence>
<evidence type="ECO:0000269" key="15">
    <source>
    </source>
</evidence>
<evidence type="ECO:0000303" key="16">
    <source>
    </source>
</evidence>
<evidence type="ECO:0000303" key="17">
    <source>
    </source>
</evidence>
<evidence type="ECO:0000303" key="18">
    <source>
    </source>
</evidence>
<evidence type="ECO:0000303" key="19">
    <source>
    </source>
</evidence>
<evidence type="ECO:0000305" key="20"/>
<evidence type="ECO:0000305" key="21">
    <source>
    </source>
</evidence>
<evidence type="ECO:0000312" key="22">
    <source>
        <dbReference type="Araport" id="AT5G39610"/>
    </source>
</evidence>
<evidence type="ECO:0000312" key="23">
    <source>
        <dbReference type="EMBL" id="BAB08893.1"/>
    </source>
</evidence>
<evidence type="ECO:0000312" key="24">
    <source>
        <dbReference type="Proteomes" id="UP000006548"/>
    </source>
</evidence>
<evidence type="ECO:0007829" key="25">
    <source>
        <dbReference type="PDB" id="7XLJ"/>
    </source>
</evidence>
<evidence type="ECO:0007829" key="26">
    <source>
        <dbReference type="PDB" id="7XP3"/>
    </source>
</evidence>
<dbReference type="EMBL" id="AY174163">
    <property type="protein sequence ID" value="AAO41710.1"/>
    <property type="molecule type" value="mRNA"/>
</dbReference>
<dbReference type="EMBL" id="AB012243">
    <property type="protein sequence ID" value="BAB08893.1"/>
    <property type="molecule type" value="Genomic_DNA"/>
</dbReference>
<dbReference type="EMBL" id="CP002688">
    <property type="protein sequence ID" value="AED94454.1"/>
    <property type="molecule type" value="Genomic_DNA"/>
</dbReference>
<dbReference type="EMBL" id="AY056327">
    <property type="protein sequence ID" value="AAL07176.1"/>
    <property type="molecule type" value="mRNA"/>
</dbReference>
<dbReference type="EMBL" id="AY091191">
    <property type="protein sequence ID" value="AAM14130.1"/>
    <property type="molecule type" value="mRNA"/>
</dbReference>
<dbReference type="EMBL" id="AY084635">
    <property type="protein sequence ID" value="AAM61198.1"/>
    <property type="status" value="ALT_INIT"/>
    <property type="molecule type" value="mRNA"/>
</dbReference>
<dbReference type="RefSeq" id="NP_198777.1">
    <property type="nucleotide sequence ID" value="NM_123323.3"/>
</dbReference>
<dbReference type="PDB" id="7XLJ">
    <property type="method" value="X-ray"/>
    <property type="resolution" value="2.45 A"/>
    <property type="chains" value="A/B=12-170"/>
</dbReference>
<dbReference type="PDB" id="7XP3">
    <property type="method" value="X-ray"/>
    <property type="resolution" value="3.25 A"/>
    <property type="chains" value="A/B/C=12-170"/>
</dbReference>
<dbReference type="PDBsum" id="7XLJ"/>
<dbReference type="PDBsum" id="7XP3"/>
<dbReference type="SMR" id="Q9FKA0"/>
<dbReference type="IntAct" id="Q9FKA0">
    <property type="interactions" value="3"/>
</dbReference>
<dbReference type="MINT" id="Q9FKA0"/>
<dbReference type="STRING" id="3702.Q9FKA0"/>
<dbReference type="PaxDb" id="3702-AT5G39610.1"/>
<dbReference type="ProteomicsDB" id="250992"/>
<dbReference type="DNASU" id="833957"/>
<dbReference type="EnsemblPlants" id="AT5G39610.1">
    <property type="protein sequence ID" value="AT5G39610.1"/>
    <property type="gene ID" value="AT5G39610"/>
</dbReference>
<dbReference type="GeneID" id="833957"/>
<dbReference type="Gramene" id="AT5G39610.1">
    <property type="protein sequence ID" value="AT5G39610.1"/>
    <property type="gene ID" value="AT5G39610"/>
</dbReference>
<dbReference type="KEGG" id="ath:AT5G39610"/>
<dbReference type="Araport" id="AT5G39610"/>
<dbReference type="TAIR" id="AT5G39610">
    <property type="gene designation" value="NAC6"/>
</dbReference>
<dbReference type="eggNOG" id="ENOG502QR2M">
    <property type="taxonomic scope" value="Eukaryota"/>
</dbReference>
<dbReference type="HOGENOM" id="CLU_035664_5_2_1"/>
<dbReference type="InParanoid" id="Q9FKA0"/>
<dbReference type="OMA" id="MLDPHIN"/>
<dbReference type="OrthoDB" id="1424968at2759"/>
<dbReference type="PhylomeDB" id="Q9FKA0"/>
<dbReference type="PRO" id="PR:Q9FKA0"/>
<dbReference type="Proteomes" id="UP000006548">
    <property type="component" value="Chromosome 5"/>
</dbReference>
<dbReference type="ExpressionAtlas" id="Q9FKA0">
    <property type="expression patterns" value="baseline and differential"/>
</dbReference>
<dbReference type="GO" id="GO:0005634">
    <property type="term" value="C:nucleus"/>
    <property type="evidence" value="ECO:0000314"/>
    <property type="project" value="UniProtKB"/>
</dbReference>
<dbReference type="GO" id="GO:0003700">
    <property type="term" value="F:DNA-binding transcription factor activity"/>
    <property type="evidence" value="ECO:0000314"/>
    <property type="project" value="TAIR"/>
</dbReference>
<dbReference type="GO" id="GO:0042803">
    <property type="term" value="F:protein homodimerization activity"/>
    <property type="evidence" value="ECO:0000314"/>
    <property type="project" value="UniProtKB"/>
</dbReference>
<dbReference type="GO" id="GO:0043565">
    <property type="term" value="F:sequence-specific DNA binding"/>
    <property type="evidence" value="ECO:0000314"/>
    <property type="project" value="UniProtKB"/>
</dbReference>
<dbReference type="GO" id="GO:0000976">
    <property type="term" value="F:transcription cis-regulatory region binding"/>
    <property type="evidence" value="ECO:0000353"/>
    <property type="project" value="TAIR"/>
</dbReference>
<dbReference type="GO" id="GO:0080187">
    <property type="term" value="P:floral organ senescence"/>
    <property type="evidence" value="ECO:0000315"/>
    <property type="project" value="TAIR"/>
</dbReference>
<dbReference type="GO" id="GO:0048527">
    <property type="term" value="P:lateral root development"/>
    <property type="evidence" value="ECO:0000315"/>
    <property type="project" value="UniProtKB"/>
</dbReference>
<dbReference type="GO" id="GO:0010150">
    <property type="term" value="P:leaf senescence"/>
    <property type="evidence" value="ECO:0000315"/>
    <property type="project" value="TAIR"/>
</dbReference>
<dbReference type="GO" id="GO:1904250">
    <property type="term" value="P:positive regulation of age-related resistance"/>
    <property type="evidence" value="ECO:0000315"/>
    <property type="project" value="UniProtKB"/>
</dbReference>
<dbReference type="GO" id="GO:0051091">
    <property type="term" value="P:positive regulation of DNA-binding transcription factor activity"/>
    <property type="evidence" value="ECO:0000314"/>
    <property type="project" value="UniProtKB"/>
</dbReference>
<dbReference type="GO" id="GO:0045893">
    <property type="term" value="P:positive regulation of DNA-templated transcription"/>
    <property type="evidence" value="ECO:0000314"/>
    <property type="project" value="TAIR"/>
</dbReference>
<dbReference type="GO" id="GO:1900057">
    <property type="term" value="P:positive regulation of leaf senescence"/>
    <property type="evidence" value="ECO:0000315"/>
    <property type="project" value="UniProtKB"/>
</dbReference>
<dbReference type="GO" id="GO:0043068">
    <property type="term" value="P:positive regulation of programmed cell death"/>
    <property type="evidence" value="ECO:0000315"/>
    <property type="project" value="UniProtKB"/>
</dbReference>
<dbReference type="GO" id="GO:0010468">
    <property type="term" value="P:regulation of gene expression"/>
    <property type="evidence" value="ECO:0000315"/>
    <property type="project" value="TAIR"/>
</dbReference>
<dbReference type="GO" id="GO:0010029">
    <property type="term" value="P:regulation of seed germination"/>
    <property type="evidence" value="ECO:0000315"/>
    <property type="project" value="UniProtKB"/>
</dbReference>
<dbReference type="GO" id="GO:0009737">
    <property type="term" value="P:response to abscisic acid"/>
    <property type="evidence" value="ECO:0000270"/>
    <property type="project" value="UniProtKB"/>
</dbReference>
<dbReference type="GO" id="GO:0009733">
    <property type="term" value="P:response to auxin"/>
    <property type="evidence" value="ECO:0000270"/>
    <property type="project" value="UniProtKB"/>
</dbReference>
<dbReference type="GO" id="GO:0009723">
    <property type="term" value="P:response to ethylene"/>
    <property type="evidence" value="ECO:0000270"/>
    <property type="project" value="UniProtKB"/>
</dbReference>
<dbReference type="GO" id="GO:0042542">
    <property type="term" value="P:response to hydrogen peroxide"/>
    <property type="evidence" value="ECO:0000270"/>
    <property type="project" value="UniProtKB"/>
</dbReference>
<dbReference type="GO" id="GO:0006979">
    <property type="term" value="P:response to oxidative stress"/>
    <property type="evidence" value="ECO:0000315"/>
    <property type="project" value="TAIR"/>
</dbReference>
<dbReference type="GO" id="GO:1902074">
    <property type="term" value="P:response to salt"/>
    <property type="evidence" value="ECO:0000270"/>
    <property type="project" value="UniProtKB"/>
</dbReference>
<dbReference type="GO" id="GO:0009651">
    <property type="term" value="P:response to salt stress"/>
    <property type="evidence" value="ECO:0000270"/>
    <property type="project" value="UniProtKB"/>
</dbReference>
<dbReference type="GO" id="GO:0090400">
    <property type="term" value="P:stress-induced premature senescence"/>
    <property type="evidence" value="ECO:0000315"/>
    <property type="project" value="UniProtKB"/>
</dbReference>
<dbReference type="FunFam" id="2.170.150.80:FF:000006">
    <property type="entry name" value="NAC domain-containing protein 100-like"/>
    <property type="match status" value="1"/>
</dbReference>
<dbReference type="Gene3D" id="2.170.150.80">
    <property type="entry name" value="NAC domain"/>
    <property type="match status" value="1"/>
</dbReference>
<dbReference type="InterPro" id="IPR003441">
    <property type="entry name" value="NAC-dom"/>
</dbReference>
<dbReference type="InterPro" id="IPR036093">
    <property type="entry name" value="NAC_dom_sf"/>
</dbReference>
<dbReference type="PANTHER" id="PTHR31744:SF201">
    <property type="entry name" value="NAC DOMAIN-CONTAINING PROTEIN 92"/>
    <property type="match status" value="1"/>
</dbReference>
<dbReference type="PANTHER" id="PTHR31744">
    <property type="entry name" value="PROTEIN CUP-SHAPED COTYLEDON 2-RELATED"/>
    <property type="match status" value="1"/>
</dbReference>
<dbReference type="Pfam" id="PF02365">
    <property type="entry name" value="NAM"/>
    <property type="match status" value="1"/>
</dbReference>
<dbReference type="SUPFAM" id="SSF101941">
    <property type="entry name" value="NAC domain"/>
    <property type="match status" value="1"/>
</dbReference>
<dbReference type="PROSITE" id="PS51005">
    <property type="entry name" value="NAC"/>
    <property type="match status" value="1"/>
</dbReference>
<keyword id="KW-0002">3D-structure</keyword>
<keyword id="KW-0010">Activator</keyword>
<keyword id="KW-0053">Apoptosis</keyword>
<keyword id="KW-0238">DNA-binding</keyword>
<keyword id="KW-0539">Nucleus</keyword>
<keyword id="KW-1185">Reference proteome</keyword>
<keyword id="KW-0804">Transcription</keyword>
<keyword id="KW-0805">Transcription regulation</keyword>
<keyword id="KW-0832">Ubl conjugation</keyword>
<comment type="function">
    <text evidence="2 3 4 6 7 9 12 13 15">Transcription activator that binds to DNA in promoters of target genes on a specific bipartite motif 5'-[ACG][CA]GT[AG](5-6n)[CT]AC[AG]-3' (PubMed:23340744). Promotes lateral root development (PubMed:16359384). Triggers the expression of senescence-associated genes during age-, salt- and dark-induced senescence through a regulatory network that may involve cross-talk with salt- and H(2)O(2)-dependent signaling pathways (PubMed:15295076, PubMed:20113437, PubMed:21303842, PubMed:9351240). Also regulates genes during seed germination (PubMed:20113437). Positively regulates aging-induced cell death (PubMed:19229035). Involved in age-related resistance (ARR) against Pseudomonas syringae pv. tomato and Hyaloperonospora arabidopsidis (PubMed:19694953). Antagonizes GLK1 and GLK2 transcriptional activity, shifting the balance from chloroplast maintenance towards deterioration during leaf senescence (PubMed:23459204). Promotes the expression of senescence-associated genes, including ENDO1/BFN1, SWEET15/SAG29 and SINA1/At3g13672, during senescence onset (PubMed:23340744).</text>
</comment>
<comment type="subunit">
    <text evidence="3 13 14">Forms homodimers (PubMed:16359384). Interacts with GLK1 and GLK2 (PubMed:23459204). Interacts with NLA (PubMed:30374089).</text>
</comment>
<comment type="interaction">
    <interactant intactId="EBI-6862413">
        <id>Q9FKA0</id>
    </interactant>
    <interactant intactId="EBI-6862475">
        <id>Q9FFH0</id>
        <label>GLK2</label>
    </interactant>
    <organismsDiffer>false</organismsDiffer>
    <experiments>6</experiments>
</comment>
<comment type="subcellular location">
    <subcellularLocation>
        <location evidence="3 13 14">Nucleus</location>
    </subcellularLocation>
    <text evidence="14">Localizes in the nucleus, where it interacts with NLA.</text>
</comment>
<comment type="tissue specificity">
    <text evidence="3 7 12">Mostly expressed in roots and flowers, and, to a lower extent, in shoots and leaves. Particularly expressed in old and senescing tissues.</text>
</comment>
<comment type="developmental stage">
    <text evidence="4 7 12">Accumulates during leaf and flower aging (PubMed:20113437). Induced by EIN2 during leaf aging, but negatively regulated by miR164, which expression decreases gradually with aging through negative regulation by EIN2 (PubMed:19229035). In leaves, accumulates at the tips and margins and in leaves undergoing senescence. Present in floral organs of partly or fully opened flowers, but not in young flower buds. Expressed in pollen grains of mature anthers, but not in immature anthers. In petals of open flowers mostly observed in the tip region. In mature siliques, accumulates at the abscission zone, in the distal portion of the valve margins and the tip. In roots, detected in primary and lateral roots, but not in root tips. In seeds present in embryos and the micropylar endosperm (PubMed:20113437, PubMed:23340744).</text>
</comment>
<comment type="induction">
    <text evidence="3 4 5 6 7 8 10 11">High levels during senescence (e.g. age-, salt- and dark-related) (PubMed:19229035, PubMed:20113437, PubMed:21511905, PubMed:22930749). By salt stress in an ethylene- and auxin-dependent manner (PubMed:16359384, PubMed:19608714, PubMed:20113437, PubMed:20404534). Induced by H(2)O(2) (PubMed:20404534). Accumulates in response to abscisic acid (ABA), ethylene (ACC) and auxin (NAA) (PubMed:16359384, PubMed:19608714). Repressed by high auxin (IAA) levels (PubMed:21511905). Age-related resistance (ARR)-associated accumulation (PubMed:19694953). Repressed by miR164 (PubMed:19229035).</text>
</comment>
<comment type="domain">
    <text evidence="1">The NAC domain includes a DNA binding domain and a dimerization domain.</text>
</comment>
<comment type="PTM">
    <text evidence="14">Ubiquitinated by NLA. Ubiquitination of NAC92 leads to its degradation by the proteasome during leaf senescence under nitrogen deficiency.</text>
</comment>
<comment type="disruption phenotype">
    <text evidence="2 3 4 6 7 9 15">No visible phenotype (PubMed:16359384). Delayed leaf senescence and flowering (PubMed:19229035, PubMed:20113437, PubMed:21303842, PubMed:9351240). Increased tolerance to various types of oxidative stress including H(2)O(2), salicylhydroxamic acid (SHAM), N,N-diethyldithio carbamic acid (DDC) and methyl viologen (MV) (PubMed:15295076). Impaired age-related resistance (ARR) against Pseudomonas syringae pv. tomato and Hyaloperonospora arabidopsidis (PubMed:19694953). Increased seed germination rate under saline conditions and delay of salinity-induced chlorophyll loss in leaves (PubMed:20113437).</text>
</comment>
<comment type="miscellaneous">
    <text evidence="21">'Oresara' means long-living in Korean.</text>
</comment>
<comment type="sequence caution" evidence="20">
    <conflict type="erroneous initiation">
        <sequence resource="EMBL-CDS" id="AAM61198"/>
    </conflict>
    <text>Truncated N-terminus.</text>
</comment>
<feature type="chain" id="PRO_0000433472" description="NAC domain-containing protein 92">
    <location>
        <begin position="1"/>
        <end position="285"/>
    </location>
</feature>
<feature type="domain" description="NAC" evidence="1">
    <location>
        <begin position="20"/>
        <end position="170"/>
    </location>
</feature>
<feature type="DNA-binding region" evidence="1">
    <location>
        <begin position="117"/>
        <end position="176"/>
    </location>
</feature>
<feature type="strand" evidence="25">
    <location>
        <begin position="24"/>
        <end position="26"/>
    </location>
</feature>
<feature type="helix" evidence="25">
    <location>
        <begin position="30"/>
        <end position="43"/>
    </location>
</feature>
<feature type="strand" evidence="25">
    <location>
        <begin position="52"/>
        <end position="54"/>
    </location>
</feature>
<feature type="helix" evidence="25">
    <location>
        <begin position="57"/>
        <end position="59"/>
    </location>
</feature>
<feature type="helix" evidence="25">
    <location>
        <begin position="62"/>
        <end position="67"/>
    </location>
</feature>
<feature type="strand" evidence="25">
    <location>
        <begin position="75"/>
        <end position="81"/>
    </location>
</feature>
<feature type="strand" evidence="26">
    <location>
        <begin position="85"/>
        <end position="88"/>
    </location>
</feature>
<feature type="strand" evidence="25">
    <location>
        <begin position="99"/>
        <end position="112"/>
    </location>
</feature>
<feature type="strand" evidence="25">
    <location>
        <begin position="115"/>
        <end position="128"/>
    </location>
</feature>
<feature type="strand" evidence="26">
    <location>
        <begin position="129"/>
        <end position="132"/>
    </location>
</feature>
<feature type="strand" evidence="25">
    <location>
        <begin position="135"/>
        <end position="145"/>
    </location>
</feature>
<feature type="helix" evidence="25">
    <location>
        <begin position="148"/>
        <end position="152"/>
    </location>
</feature>
<feature type="turn" evidence="26">
    <location>
        <begin position="159"/>
        <end position="161"/>
    </location>
</feature>
<feature type="strand" evidence="25">
    <location>
        <begin position="162"/>
        <end position="169"/>
    </location>
</feature>
<sequence>MDYEASRIVEMVEDEEHIDLPPGFRFHPTDEELITHYLKPKVFNTFFSATAIGEVDLNKIEPWDLPWKAKMGEKEWYFFCVRDRKYPTGLRTNRATEAGYWKATGKDKEIFKGKSLVGMKKTLVFYKGRAPKGVKTNWVMHEYRLEGKYCIENLPQTAKNEWVICRVFQKRADGTKVPMSMLDPHINRMEPAGLPSLMDCSQRDSFTGSSSHVTCFSDQETEDKRLVHESKDGFGSLFYSDPLFLQDNYSLMKLLLDGQETQFSGKPFDGRDSSGTEELDCVWNF</sequence>
<name>NAC92_ARATH</name>
<proteinExistence type="evidence at protein level"/>
<accession>Q9FKA0</accession>
<accession>Q8LFU6</accession>
<gene>
    <name evidence="16" type="primary">NAC92</name>
    <name evidence="17" type="synonym">NAC2</name>
    <name evidence="18" type="synonym">NAC6</name>
    <name evidence="19" type="synonym">ORE1</name>
    <name evidence="22" type="ordered locus">At5g39610</name>
    <name evidence="23" type="ORF">MIJ24.11</name>
</gene>
<reference key="1">
    <citation type="journal article" date="2005" name="Plant J.">
        <title>AtNAC2, a transcription factor downstream of ethylene and auxin signaling pathways, is involved in salt stress response and lateral root development.</title>
        <authorList>
            <person name="He X.-J."/>
            <person name="Mu R.-L."/>
            <person name="Cao W.-H."/>
            <person name="Zhang Z.-G."/>
            <person name="Zhang J.-S."/>
            <person name="Chen S.-Y."/>
        </authorList>
    </citation>
    <scope>NUCLEOTIDE SEQUENCE [MRNA]</scope>
    <scope>INDUCTION BY SALT STRESS; ABSCISIC ACID; ETHYLENE AND AUXIN</scope>
    <scope>SUBCELLULAR LOCATION</scope>
    <scope>FUNCTION</scope>
    <scope>DISRUPTION PHENOTYPE</scope>
    <scope>HOMODIMERIZATION</scope>
    <scope>SUBUNIT</scope>
    <scope>TISSUE SPECIFICITY</scope>
    <source>
        <strain>cv. Columbia</strain>
    </source>
</reference>
<reference key="2">
    <citation type="journal article" date="1998" name="DNA Res.">
        <title>Structural analysis of Arabidopsis thaliana chromosome 5. VI. Sequence features of the regions of 1,367,185 bp covered by 19 physically assigned P1 and TAC clones.</title>
        <authorList>
            <person name="Kotani H."/>
            <person name="Nakamura Y."/>
            <person name="Sato S."/>
            <person name="Asamizu E."/>
            <person name="Kaneko T."/>
            <person name="Miyajima N."/>
            <person name="Tabata S."/>
        </authorList>
    </citation>
    <scope>NUCLEOTIDE SEQUENCE [LARGE SCALE GENOMIC DNA]</scope>
    <source>
        <strain>cv. Columbia</strain>
    </source>
</reference>
<reference key="3">
    <citation type="journal article" date="2017" name="Plant J.">
        <title>Araport11: a complete reannotation of the Arabidopsis thaliana reference genome.</title>
        <authorList>
            <person name="Cheng C.Y."/>
            <person name="Krishnakumar V."/>
            <person name="Chan A.P."/>
            <person name="Thibaud-Nissen F."/>
            <person name="Schobel S."/>
            <person name="Town C.D."/>
        </authorList>
    </citation>
    <scope>GENOME REANNOTATION</scope>
    <source>
        <strain>cv. Columbia</strain>
    </source>
</reference>
<reference key="4">
    <citation type="journal article" date="2003" name="Science">
        <title>Empirical analysis of transcriptional activity in the Arabidopsis genome.</title>
        <authorList>
            <person name="Yamada K."/>
            <person name="Lim J."/>
            <person name="Dale J.M."/>
            <person name="Chen H."/>
            <person name="Shinn P."/>
            <person name="Palm C.J."/>
            <person name="Southwick A.M."/>
            <person name="Wu H.C."/>
            <person name="Kim C.J."/>
            <person name="Nguyen M."/>
            <person name="Pham P.K."/>
            <person name="Cheuk R.F."/>
            <person name="Karlin-Newmann G."/>
            <person name="Liu S.X."/>
            <person name="Lam B."/>
            <person name="Sakano H."/>
            <person name="Wu T."/>
            <person name="Yu G."/>
            <person name="Miranda M."/>
            <person name="Quach H.L."/>
            <person name="Tripp M."/>
            <person name="Chang C.H."/>
            <person name="Lee J.M."/>
            <person name="Toriumi M.J."/>
            <person name="Chan M.M."/>
            <person name="Tang C.C."/>
            <person name="Onodera C.S."/>
            <person name="Deng J.M."/>
            <person name="Akiyama K."/>
            <person name="Ansari Y."/>
            <person name="Arakawa T."/>
            <person name="Banh J."/>
            <person name="Banno F."/>
            <person name="Bowser L."/>
            <person name="Brooks S.Y."/>
            <person name="Carninci P."/>
            <person name="Chao Q."/>
            <person name="Choy N."/>
            <person name="Enju A."/>
            <person name="Goldsmith A.D."/>
            <person name="Gurjal M."/>
            <person name="Hansen N.F."/>
            <person name="Hayashizaki Y."/>
            <person name="Johnson-Hopson C."/>
            <person name="Hsuan V.W."/>
            <person name="Iida K."/>
            <person name="Karnes M."/>
            <person name="Khan S."/>
            <person name="Koesema E."/>
            <person name="Ishida J."/>
            <person name="Jiang P.X."/>
            <person name="Jones T."/>
            <person name="Kawai J."/>
            <person name="Kamiya A."/>
            <person name="Meyers C."/>
            <person name="Nakajima M."/>
            <person name="Narusaka M."/>
            <person name="Seki M."/>
            <person name="Sakurai T."/>
            <person name="Satou M."/>
            <person name="Tamse R."/>
            <person name="Vaysberg M."/>
            <person name="Wallender E.K."/>
            <person name="Wong C."/>
            <person name="Yamamura Y."/>
            <person name="Yuan S."/>
            <person name="Shinozaki K."/>
            <person name="Davis R.W."/>
            <person name="Theologis A."/>
            <person name="Ecker J.R."/>
        </authorList>
    </citation>
    <scope>NUCLEOTIDE SEQUENCE [LARGE SCALE MRNA]</scope>
    <source>
        <strain>cv. Columbia</strain>
    </source>
</reference>
<reference key="5">
    <citation type="submission" date="2002-03" db="EMBL/GenBank/DDBJ databases">
        <title>Full-length cDNA from Arabidopsis thaliana.</title>
        <authorList>
            <person name="Brover V.V."/>
            <person name="Troukhan M.E."/>
            <person name="Alexandrov N.A."/>
            <person name="Lu Y.-P."/>
            <person name="Flavell R.B."/>
            <person name="Feldmann K.A."/>
        </authorList>
    </citation>
    <scope>NUCLEOTIDE SEQUENCE [LARGE SCALE MRNA]</scope>
</reference>
<reference key="6">
    <citation type="journal article" date="1997" name="Plant J.">
        <title>Identification of three genetic loci controlling leaf senescence in Arabidopsis thaliana.</title>
        <authorList>
            <person name="Oh S.A."/>
            <person name="Park J.-H."/>
            <person name="Lee G.I."/>
            <person name="Paek K.H."/>
            <person name="Park S.K."/>
            <person name="Nam H.G."/>
        </authorList>
    </citation>
    <scope>FUNCTION</scope>
    <scope>DISRUPTION PHENOTYPE</scope>
    <source>
        <strain>cv. Columbia</strain>
    </source>
</reference>
<reference key="7">
    <citation type="journal article" date="2003" name="DNA Res.">
        <title>Comprehensive analysis of NAC family genes in Oryza sativa and Arabidopsis thaliana.</title>
        <authorList>
            <person name="Ooka H."/>
            <person name="Satoh K."/>
            <person name="Doi K."/>
            <person name="Nagata T."/>
            <person name="Otomo Y."/>
            <person name="Murakami K."/>
            <person name="Matsubara K."/>
            <person name="Osato N."/>
            <person name="Kawai J."/>
            <person name="Carninci P."/>
            <person name="Hayashizaki Y."/>
            <person name="Suzuki K."/>
            <person name="Kojima K."/>
            <person name="Takahara Y."/>
            <person name="Yamamoto K."/>
            <person name="Kikuchi S."/>
        </authorList>
    </citation>
    <scope>GENE FAMILY</scope>
    <scope>NOMENCLATURE</scope>
</reference>
<reference key="8">
    <citation type="journal article" date="2004" name="Plant Cell Physiol.">
        <title>The delayed leaf senescence mutants of Arabidopsis, ore1, ore3, and ore9 are tolerant to oxidative stress.</title>
        <authorList>
            <person name="Woo H.R."/>
            <person name="Kim J.H."/>
            <person name="Nam H.G."/>
            <person name="Lim P.O."/>
        </authorList>
    </citation>
    <scope>FUNCTION</scope>
    <scope>DISRUPTION PHENOTYPE</scope>
</reference>
<reference key="9">
    <citation type="journal article" date="2009" name="Mol. Plant Pathol.">
        <title>Forward and reverse genetics to identify genes involved in the age-related resistance response in Arabidopsis thaliana.</title>
        <authorList>
            <person name="Carviel J.L."/>
            <person name="Al-Daoud F."/>
            <person name="Neumann M."/>
            <person name="Mohammad A."/>
            <person name="Provart N.J."/>
            <person name="Moeder W."/>
            <person name="Yoshioka K."/>
            <person name="Cameron R.K."/>
        </authorList>
    </citation>
    <scope>FUNCTION</scope>
    <scope>DISRUPTION PHENOTYPE</scope>
    <scope>INDUCTION BY AGE-RELATED RESISTANCE</scope>
    <source>
        <strain>cv. Columbia</strain>
    </source>
</reference>
<reference key="10">
    <citation type="journal article" date="2009" name="Plant Cell Physiol.">
        <title>Effects of tobacco ethylene receptor mutations on receptor kinase activity, plant growth and stress responses.</title>
        <authorList>
            <person name="Chen T."/>
            <person name="Liu J."/>
            <person name="Lei G."/>
            <person name="Liu Y.-F."/>
            <person name="Li Z.-G."/>
            <person name="Tao J.-J."/>
            <person name="Hao Y.-J."/>
            <person name="Cao Y.-R."/>
            <person name="Lin Q."/>
            <person name="Zhang W.-K."/>
            <person name="Ma B."/>
            <person name="Chen S.-Y."/>
            <person name="Zhang J.-S."/>
        </authorList>
    </citation>
    <scope>INDUCTION BY SALT AND ETHYLENE</scope>
</reference>
<reference key="11">
    <citation type="journal article" date="2009" name="Science">
        <title>Trifurcate feed-forward regulation of age-dependent cell death involving miR164 in Arabidopsis.</title>
        <authorList>
            <person name="Kim J.H."/>
            <person name="Woo H.R."/>
            <person name="Kim J."/>
            <person name="Lim P.O."/>
            <person name="Lee I.C."/>
            <person name="Choi S.H."/>
            <person name="Hwang D."/>
            <person name="Nam H.G."/>
        </authorList>
    </citation>
    <scope>FUNCTION</scope>
    <scope>DISRUPTION PHENOTYPE</scope>
    <scope>DEVELOPMENTAL STAGE</scope>
    <scope>INDUCTION BY MIR164 AND SENESCENCE</scope>
</reference>
<reference key="12">
    <citation type="journal article" date="2010" name="Plant J.">
        <title>A gene regulatory network controlled by the NAC transcription factor ANAC092/AtNAC2/ORE1 during salt-promoted senescence.</title>
        <authorList>
            <person name="Balazadeh S."/>
            <person name="Siddiqui H."/>
            <person name="Allu A.D."/>
            <person name="Matallana-Ramirez L.P."/>
            <person name="Caldana C."/>
            <person name="Mehrnia M."/>
            <person name="Zanor M.I."/>
            <person name="Koehler B."/>
            <person name="Mueller-Roeber B."/>
        </authorList>
    </citation>
    <scope>FUNCTION</scope>
    <scope>DISRUPTION PHENOTYPE</scope>
    <scope>INDUCTION BY SALT STRESS AND SENESCENCE</scope>
    <scope>TISSUE SPECIFICITY</scope>
    <scope>DEVELOPMENTAL STAGE</scope>
    <source>
        <strain>cv. Columbia</strain>
    </source>
</reference>
<reference key="13">
    <citation type="journal article" date="2010" name="Plant Signal. Behav.">
        <title>Salt-triggered expression of the ANAC092-dependent senescence regulon in Arabidopsis thaliana.</title>
        <authorList>
            <person name="Balazadeh S."/>
            <person name="Wu A."/>
            <person name="Mueller-Roeber B."/>
        </authorList>
    </citation>
    <scope>INDUCTION BY SALT AND H2O2</scope>
</reference>
<reference key="14">
    <citation type="journal article" date="2011" name="J. Exp. Bot.">
        <title>YUCCA6 over-expression demonstrates auxin function in delaying leaf senescence in Arabidopsis thaliana.</title>
        <authorList>
            <person name="Kim J.I."/>
            <person name="Murphy A.S."/>
            <person name="Baek D."/>
            <person name="Lee S.-W."/>
            <person name="Yun D.-J."/>
            <person name="Bressan R.A."/>
            <person name="Narasimhan M.L."/>
        </authorList>
    </citation>
    <scope>INDUCTION BY AUXIN AND SENESCENCE</scope>
</reference>
<reference key="15">
    <citation type="journal article" date="2011" name="Mol. Plant">
        <title>ORS1, an H(2)O(2)-responsive NAC transcription factor, controls senescence in Arabidopsis thaliana.</title>
        <authorList>
            <person name="Balazadeh S."/>
            <person name="Kwasniewski M."/>
            <person name="Caldana C."/>
            <person name="Mehrnia M."/>
            <person name="Zanor M.I."/>
            <person name="Xue G.-P."/>
            <person name="Mueller-Roeber B."/>
        </authorList>
    </citation>
    <scope>FUNCTION</scope>
    <scope>DISRUPTION PHENOTYPE</scope>
</reference>
<reference key="16">
    <citation type="journal article" date="2012" name="Plant Physiol.">
        <title>Carbon deprivation-driven transcriptome reprogramming in detached developmentally arresting Arabidopsis inflorescences.</title>
        <authorList>
            <person name="Trivellini A."/>
            <person name="Jibran R."/>
            <person name="Watson L.M."/>
            <person name="O'Donoghue E.M."/>
            <person name="Ferrante A."/>
            <person name="Sullivan K.L."/>
            <person name="Dijkwel P.P."/>
            <person name="Hunter D.A."/>
        </authorList>
    </citation>
    <scope>INDUCTION BY SENESCENCE</scope>
</reference>
<reference key="17">
    <citation type="journal article" date="2013" name="EMBO Rep.">
        <title>ORE1 balances leaf senescence against maintenance by antagonizing G2-like-mediated transcription.</title>
        <authorList>
            <person name="Rauf M."/>
            <person name="Arif M."/>
            <person name="Dortay H."/>
            <person name="Matallana-Ramirez L.P."/>
            <person name="Waters M.T."/>
            <person name="Gil Nam H."/>
            <person name="Lim P.-O."/>
            <person name="Mueller-Roeber B."/>
            <person name="Balazadeh S."/>
        </authorList>
    </citation>
    <scope>FUNCTION</scope>
    <scope>INTERACTION WITH GLK1 AND GLK2</scope>
    <scope>SUBCELLULAR LOCATION</scope>
    <source>
        <strain>cv. Columbia</strain>
    </source>
</reference>
<reference key="18">
    <citation type="journal article" date="2013" name="Mol. Plant">
        <title>NAC transcription factor ORE1 and senescence-induced BIFUNCTIONAL NUCLEASE1 (BFN1) constitute a regulatory cascade in Arabidopsis.</title>
        <authorList>
            <person name="Matallana-Ramirez L.P."/>
            <person name="Rauf M."/>
            <person name="Farage-Barhom S."/>
            <person name="Dortay H."/>
            <person name="Xue G.-P."/>
            <person name="Droege-Laser W."/>
            <person name="Lers A."/>
            <person name="Balazadeh S."/>
            <person name="Mueller-Roeber B."/>
        </authorList>
    </citation>
    <scope>FUNCTION</scope>
    <scope>TISSUE SPECIFICITY</scope>
    <scope>DEVELOPMENTAL STAGE</scope>
    <source>
        <strain>cv. Columbia</strain>
    </source>
</reference>
<reference key="19">
    <citation type="journal article" date="2018" name="Nat. Plants">
        <title>Arabidopsis NITROGEN LIMITATION ADAPTATION regulates ORE1 homeostasis during senescence induced by nitrogen deficiency.</title>
        <authorList>
            <person name="Park B.S."/>
            <person name="Yao T."/>
            <person name="Seo J.S."/>
            <person name="Wong E.C.C."/>
            <person name="Mitsuda N."/>
            <person name="Huang C.H."/>
            <person name="Chua N.H."/>
        </authorList>
    </citation>
    <scope>INTERACTION WITH NLA</scope>
    <scope>SUBCELLULAR LOCATION</scope>
    <scope>UBIQUITINATION BY NLA</scope>
</reference>
<organism evidence="24">
    <name type="scientific">Arabidopsis thaliana</name>
    <name type="common">Mouse-ear cress</name>
    <dbReference type="NCBI Taxonomy" id="3702"/>
    <lineage>
        <taxon>Eukaryota</taxon>
        <taxon>Viridiplantae</taxon>
        <taxon>Streptophyta</taxon>
        <taxon>Embryophyta</taxon>
        <taxon>Tracheophyta</taxon>
        <taxon>Spermatophyta</taxon>
        <taxon>Magnoliopsida</taxon>
        <taxon>eudicotyledons</taxon>
        <taxon>Gunneridae</taxon>
        <taxon>Pentapetalae</taxon>
        <taxon>rosids</taxon>
        <taxon>malvids</taxon>
        <taxon>Brassicales</taxon>
        <taxon>Brassicaceae</taxon>
        <taxon>Camelineae</taxon>
        <taxon>Arabidopsis</taxon>
    </lineage>
</organism>
<protein>
    <recommendedName>
        <fullName evidence="16">NAC domain-containing protein 92</fullName>
        <shortName evidence="16">ANAC092</shortName>
        <shortName evidence="17">AtNAC2</shortName>
        <shortName evidence="18">AtNAC6</shortName>
    </recommendedName>
    <alternativeName>
        <fullName evidence="19">Protein ORESARA 1</fullName>
    </alternativeName>
</protein>